<proteinExistence type="inferred from homology"/>
<evidence type="ECO:0000255" key="1">
    <source>
        <dbReference type="HAMAP-Rule" id="MF_00705"/>
    </source>
</evidence>
<evidence type="ECO:0000256" key="2">
    <source>
        <dbReference type="SAM" id="MobiDB-lite"/>
    </source>
</evidence>
<sequence>MYVGRFVVVSPEVGAYRVSSRSFPNRQAVQRDGTVTVEPTPDAPETDNPYISYNGVRVTERGAVVGNGSHVDPIAEKLELGYPARDAIAEPLLSLDFEKDDYDTPRVAGIVGVDAADPTTNADGPGAVIGTVRRDALLVEEVTEPTLVATYEENSPTAFDLAATDASDVAREVYDHEYEHAVCSAGVAGSAGEFDVAVYNGE</sequence>
<protein>
    <recommendedName>
        <fullName evidence="1">IMP cyclohydrolase</fullName>
        <ecNumber evidence="1">3.5.4.10</ecNumber>
    </recommendedName>
    <alternativeName>
        <fullName evidence="1">IMP synthase</fullName>
    </alternativeName>
    <alternativeName>
        <fullName evidence="1">Inosinicase</fullName>
    </alternativeName>
</protein>
<name>PURO_HALMA</name>
<organism>
    <name type="scientific">Haloarcula marismortui (strain ATCC 43049 / DSM 3752 / JCM 8966 / VKM B-1809)</name>
    <name type="common">Halobacterium marismortui</name>
    <dbReference type="NCBI Taxonomy" id="272569"/>
    <lineage>
        <taxon>Archaea</taxon>
        <taxon>Methanobacteriati</taxon>
        <taxon>Methanobacteriota</taxon>
        <taxon>Stenosarchaea group</taxon>
        <taxon>Halobacteria</taxon>
        <taxon>Halobacteriales</taxon>
        <taxon>Haloarculaceae</taxon>
        <taxon>Haloarcula</taxon>
    </lineage>
</organism>
<feature type="chain" id="PRO_0000349157" description="IMP cyclohydrolase">
    <location>
        <begin position="1"/>
        <end position="202"/>
    </location>
</feature>
<feature type="region of interest" description="Disordered" evidence="2">
    <location>
        <begin position="29"/>
        <end position="52"/>
    </location>
</feature>
<keyword id="KW-0378">Hydrolase</keyword>
<keyword id="KW-0658">Purine biosynthesis</keyword>
<keyword id="KW-1185">Reference proteome</keyword>
<reference key="1">
    <citation type="journal article" date="2004" name="Genome Res.">
        <title>Genome sequence of Haloarcula marismortui: a halophilic archaeon from the Dead Sea.</title>
        <authorList>
            <person name="Baliga N.S."/>
            <person name="Bonneau R."/>
            <person name="Facciotti M.T."/>
            <person name="Pan M."/>
            <person name="Glusman G."/>
            <person name="Deutsch E.W."/>
            <person name="Shannon P."/>
            <person name="Chiu Y."/>
            <person name="Weng R.S."/>
            <person name="Gan R.R."/>
            <person name="Hung P."/>
            <person name="Date S.V."/>
            <person name="Marcotte E."/>
            <person name="Hood L."/>
            <person name="Ng W.V."/>
        </authorList>
    </citation>
    <scope>NUCLEOTIDE SEQUENCE [LARGE SCALE GENOMIC DNA]</scope>
    <source>
        <strain>ATCC 43049 / DSM 3752 / JCM 8966 / VKM B-1809</strain>
    </source>
</reference>
<dbReference type="EC" id="3.5.4.10" evidence="1"/>
<dbReference type="EMBL" id="AY596297">
    <property type="protein sequence ID" value="AAV47438.1"/>
    <property type="molecule type" value="Genomic_DNA"/>
</dbReference>
<dbReference type="RefSeq" id="WP_004959818.1">
    <property type="nucleotide sequence ID" value="NZ_CP039138.1"/>
</dbReference>
<dbReference type="SMR" id="Q5UZ65"/>
<dbReference type="STRING" id="272569.rrnAC2659"/>
<dbReference type="PaxDb" id="272569-rrnAC2659"/>
<dbReference type="EnsemblBacteria" id="AAV47438">
    <property type="protein sequence ID" value="AAV47438"/>
    <property type="gene ID" value="rrnAC2659"/>
</dbReference>
<dbReference type="KEGG" id="hma:rrnAC2659"/>
<dbReference type="PATRIC" id="fig|272569.17.peg.3253"/>
<dbReference type="eggNOG" id="arCOG04727">
    <property type="taxonomic scope" value="Archaea"/>
</dbReference>
<dbReference type="HOGENOM" id="CLU_1352116_0_0_2"/>
<dbReference type="UniPathway" id="UPA00074">
    <property type="reaction ID" value="UER00135"/>
</dbReference>
<dbReference type="Proteomes" id="UP000001169">
    <property type="component" value="Chromosome I"/>
</dbReference>
<dbReference type="GO" id="GO:0003937">
    <property type="term" value="F:IMP cyclohydrolase activity"/>
    <property type="evidence" value="ECO:0007669"/>
    <property type="project" value="UniProtKB-UniRule"/>
</dbReference>
<dbReference type="GO" id="GO:0006189">
    <property type="term" value="P:'de novo' IMP biosynthetic process"/>
    <property type="evidence" value="ECO:0007669"/>
    <property type="project" value="UniProtKB-UniRule"/>
</dbReference>
<dbReference type="Gene3D" id="3.60.20.20">
    <property type="entry name" value="Inosine monophosphate cyclohydrolase-like"/>
    <property type="match status" value="1"/>
</dbReference>
<dbReference type="HAMAP" id="MF_00705">
    <property type="entry name" value="IMP_cyclohydrol"/>
    <property type="match status" value="1"/>
</dbReference>
<dbReference type="InterPro" id="IPR010191">
    <property type="entry name" value="IMP_cyclohydrolase"/>
</dbReference>
<dbReference type="InterPro" id="IPR020600">
    <property type="entry name" value="IMP_cyclohydrolase-like"/>
</dbReference>
<dbReference type="InterPro" id="IPR036795">
    <property type="entry name" value="IMP_cyclohydrolase-like_sf"/>
</dbReference>
<dbReference type="NCBIfam" id="NF003167">
    <property type="entry name" value="PRK04151.1"/>
    <property type="match status" value="1"/>
</dbReference>
<dbReference type="NCBIfam" id="TIGR01922">
    <property type="entry name" value="purO_arch"/>
    <property type="match status" value="1"/>
</dbReference>
<dbReference type="Pfam" id="PF07826">
    <property type="entry name" value="IMP_cyclohyd"/>
    <property type="match status" value="1"/>
</dbReference>
<dbReference type="PIRSF" id="PIRSF004866">
    <property type="entry name" value="IMP_cclhdr_arch"/>
    <property type="match status" value="1"/>
</dbReference>
<dbReference type="SUPFAM" id="SSF75569">
    <property type="entry name" value="Archaeal IMP cyclohydrolase PurO"/>
    <property type="match status" value="1"/>
</dbReference>
<comment type="function">
    <text evidence="1">Catalyzes the cyclization of 5-formylamidoimidazole-4-carboxamide ribonucleotide to IMP.</text>
</comment>
<comment type="catalytic activity">
    <reaction evidence="1">
        <text>IMP + H2O = 5-formamido-1-(5-phospho-D-ribosyl)imidazole-4-carboxamide</text>
        <dbReference type="Rhea" id="RHEA:18445"/>
        <dbReference type="ChEBI" id="CHEBI:15377"/>
        <dbReference type="ChEBI" id="CHEBI:58053"/>
        <dbReference type="ChEBI" id="CHEBI:58467"/>
        <dbReference type="EC" id="3.5.4.10"/>
    </reaction>
</comment>
<comment type="pathway">
    <text evidence="1">Purine metabolism; IMP biosynthesis via de novo pathway; IMP from 5-formamido-1-(5-phospho-D-ribosyl)imidazole-4-carboxamide: step 1/1.</text>
</comment>
<comment type="similarity">
    <text evidence="1">Belongs to the archaeal IMP cyclohydrolase family.</text>
</comment>
<accession>Q5UZ65</accession>
<gene>
    <name evidence="1" type="primary">purO</name>
    <name type="ordered locus">rrnAC2659</name>
</gene>